<comment type="function">
    <text evidence="2 3 4 5 6 8 9">Component of the glideosome complex, an inner membrane complex structure involved in parasite gliding motility and host cell invasion (PubMed:16321976, PubMed:16513191, PubMed:16750579, PubMed:19576251). During the asexual blood stage, may play a role in the assembly and anchoring of the glideosome complex to the inner membrane complex (PubMed:16750579). During the sexual stage in the vector mosquito midgut, protects gametocytes against host alternative complement pathway-mediated elimination by interacting with host complement inhibitor factor H (PubMed:23332154). Has phosphatase activity towards nucleotides such as ATP, vitamins B1 and B6, phosphorylated sugars, glycerol phosphates and inositol triphosphates (PubMed:20070315). However, the phosphatase activity is controversial (PubMed:22387043).</text>
</comment>
<comment type="catalytic activity">
    <reaction evidence="6">
        <text>a phosphate monoester + H2O = an alcohol + phosphate</text>
        <dbReference type="Rhea" id="RHEA:15017"/>
        <dbReference type="ChEBI" id="CHEBI:15377"/>
        <dbReference type="ChEBI" id="CHEBI:30879"/>
        <dbReference type="ChEBI" id="CHEBI:43474"/>
        <dbReference type="ChEBI" id="CHEBI:67140"/>
        <dbReference type="EC" id="3.1.3.2"/>
    </reaction>
</comment>
<comment type="cofactor">
    <cofactor evidence="8">
        <name>a metal cation</name>
        <dbReference type="ChEBI" id="CHEBI:25213"/>
    </cofactor>
    <text evidence="8">Binds 2 metal cations (PubMed:22387043). The role of the metal cation is unclear (PubMed:22387043).</text>
</comment>
<comment type="activity regulation">
    <text evidence="6">Activity is independent of metal ions.</text>
</comment>
<comment type="biophysicochemical properties">
    <kinetics>
        <KM evidence="6">389 uM for ATP (at pH 5.5 and 37 degrees Celsius)</KM>
        <KM evidence="6">365 uM for ATP (at pH 7.0 and 37 degrees Celsius)</KM>
        <KM evidence="6">568 uM for ADP (at pH 5.5 and 37 degrees Celsius)</KM>
        <KM evidence="6">590 uM for ADP (at pH 7.0 and 37 degrees Celsius)</KM>
        <KM evidence="6">458 uM for CTP (at pH 5.5 and 37 degrees Celsius)</KM>
        <KM evidence="6">454 uM for CTP (at pH 7.0 and 37 degrees Celsius)</KM>
        <KM evidence="6">1474 uM for pyridoxal 5-phosphate (PLP) (at pH 5.5 and 37 degrees Celsius)</KM>
        <KM evidence="6">1412 uM for pyridoxal 5-phosphate (PLP) (at pH 7.0 and 37 degrees Celsius)</KM>
        <KM evidence="6">1595 uM for glycerol-3-phosphate (at pH 5.5 and 37 degrees Celsius)</KM>
        <KM evidence="6">1487 uM for glycerol-3-phosphate (at pH 7.0 and 37 degrees Celsius)</KM>
        <Vmax evidence="6">96.0 nmol/min/mg enzyme toward ATP (at pH 5.5 and 37 degrees Celsius)</Vmax>
        <Vmax evidence="6">95.0 nmol/min/mg enzyme toward ATP (at pH 7 and 37 degrees Celsius)</Vmax>
        <Vmax evidence="6">75.0 nmol/min/mg enzyme toward ADP (at pH 5.5 and 37 degrees Celsius)</Vmax>
        <Vmax evidence="6">73.0 nmol/min/mg enzyme toward ADP (at pH 7 and 37 degrees Celsius)</Vmax>
        <Vmax evidence="6">79.0 nmol/min/mg enzyme toward CTP (at pH 5.5 and 37 degrees Celsius)</Vmax>
        <Vmax evidence="6">76.0 nmol/min/mg enzyme toward CTP (at pH 7 and 37 degrees Celsius)</Vmax>
        <Vmax evidence="6">70.0 nmol/min/mg enzyme toward pyridoxal 5-phosphate (PLP) (at pH 5.5 and 37 degrees Celsius)</Vmax>
        <Vmax evidence="6">70.0 nmol/min/mg enzyme toward pyridoxal 5-phosphate (PLP) (at pH 7 and 37 degrees Celsius)</Vmax>
        <Vmax evidence="6">87.0 nmol/min/mg enzyme toward glycerol-3-phosphate (at pH 5.5 and 37 degrees Celsius)</Vmax>
        <Vmax evidence="6">88.0 nmol/min/mg enzyme toward glycerol-3-phosphate (at pH 7 and 37 degrees Celsius)</Vmax>
        <text evidence="6">kcat is 3.9 min(-1) with ATP as substrate (at pH 5.5 and 37 degrees Celsius) (PubMed:20070315). kcat is 3.8 min(-1) with ATP as substrate (at pH 7 and 37 degrees Celsius) (PubMed:20070315). kcat is 3.0 min(-1) with ADP as substrate (at pH 5.5 and 37 degrees Celsius) (PubMed:20070315). kcat is 2.9 min(-1) with ADP as substrate (at pH 7 and 37 degrees Celsius) (PubMed:20070315). kcat is 3.2 min(-1) with CTP as substrate (at pH 5.5 and 37 degrees Celsius) (PubMed:20070315). kcat is 3.1 min(-1) with CTP as substrate (at pH 7 and 37 degrees Celsius) (PubMed:20070315). kcat is 2.8 min(-1) with pyridoxal 5-phosphate (PLP) as substrate (at pH 5.5 and 37 degrees Celsius) (PubMed:20070315). kcat is 2.8 min(-1) with pyridoxal 5-phosphate (PLP) as substrate (at pH 7 and 37 degrees Celsius) (PubMed:20070315). kcat is 3.5 min(-1) with glycerol-3-phosphate as substrate (at pH 5.5 and 37 degrees Celsius) (PubMed:20070315). kcat is 3.6 min(-1) with glycerol-3-phosphate as substrate (at pH 7 and 37 degrees Celsius) (PubMed:20070315).</text>
    </kinetics>
    <phDependence>
        <text evidence="6">Optimum pH is 5-7.</text>
    </phDependence>
</comment>
<comment type="subunit">
    <text evidence="2 3 4 5 7 9">Component of the glideosome complex composed of GAP50, GAP45, MTIP and MyoA; the complex is formed during the late schizont stage and in merozoites (PubMed:16321976, PubMed:16513191, PubMed:16750579, PubMed:19576251, PubMed:21239623). MyoA, MTIP and GAP45 probably form an initial complex in the cytoplasm which is then recruited to the outer face of the inner membrane complex via the interaction with GAP50 (PubMed:16750579). Interacts with GAP45; the interaction is independent of GAP45 phosphorylation status and can also occur independently of the formation of the glideosome complex (PubMed:19576251). Interacts with human factor H isoform CFH (via sushi 6-7 domains) and isoform FHL-1 (via sushi 6-7 domains); the interaction occurs in the vector mosquito midgut at the surface of activated gametocytes; the interaction protects the parasite from alternative complement pathway-mediated elimination (PubMed:23332154).</text>
</comment>
<comment type="subcellular location">
    <subcellularLocation>
        <location evidence="2 3 6 7 9">Inner membrane complex</location>
        <topology evidence="12">Single-pass type I membrane protein</topology>
    </subcellularLocation>
    <subcellularLocation>
        <location evidence="9">Cell membrane</location>
        <topology evidence="12">Single-pass type I membrane protein</topology>
    </subcellularLocation>
    <subcellularLocation>
        <location evidence="7">Endoplasmic reticulum membrane</location>
        <topology evidence="12">Single-pass type I membrane protein</topology>
    </subcellularLocation>
    <text evidence="2 7 9">During late-ring to mid-trophozoite stages, localizes to the endoplasmic reticulum (PubMed:21239623). During schizont maturation, re-localizes to ring-shape structures at the periphery (PubMed:21239623). Localizes to the apical end of the developing merozoites and then expands further around the surface of the nascent daughter cells (PubMed:21239623). During invasion, localizes to the interface between the invading merozoite and the host erythrocyte membrane (PubMed:16321976). Localizes to the inner membrane complex (IMC) in intraerythrocytic gametocytes (PubMed:23332154). Following gametocyte activation and disintegration of the IMC relocalizes to the macrogamete cell membrane (PubMed:23332154).</text>
</comment>
<comment type="developmental stage">
    <text evidence="2 3 4 5 6 7 9">Expressed during the asexual blood stage; expression begins in rings and peaks in schizonts and merozoites (at protein level) (PubMed:16321976, PubMed:16513191, PubMed:16750579, PubMed:19576251, PubMed:20070315, PubMed:21239623, PubMed:23332154). Expressed in gametocytes (at protein level) (PubMed:23332154). Expressed in the zygote at the early stages (at protein level) (PubMed:23332154).</text>
</comment>
<comment type="domain">
    <text evidence="7">The C-terminal transmembrane and cytoplasmic domains are required for the trafficking of the protein to the inner membrane complex.</text>
</comment>
<comment type="PTM">
    <text evidence="13 14">The N-terminus signal is likely to be cleaved.</text>
</comment>
<comment type="similarity">
    <text evidence="12">Belongs to the metallophosphoesterase superfamily. Purple acid phosphatase family.</text>
</comment>
<comment type="caution">
    <text evidence="6 8">The phosphatase activity appears to be controversial (PubMed:20070315, PubMed:22387043). The active site residues are not conserved (PubMed:22387043). One study shows that there is no phosphatase activity towards synthetic substrate pNPP (PubMed:22387043). However, another study shows a broad specificity towards organic phosphoester substrates (PubMed:20070315).</text>
</comment>
<evidence type="ECO:0000255" key="1"/>
<evidence type="ECO:0000269" key="2">
    <source>
    </source>
</evidence>
<evidence type="ECO:0000269" key="3">
    <source>
    </source>
</evidence>
<evidence type="ECO:0000269" key="4">
    <source>
    </source>
</evidence>
<evidence type="ECO:0000269" key="5">
    <source>
    </source>
</evidence>
<evidence type="ECO:0000269" key="6">
    <source>
    </source>
</evidence>
<evidence type="ECO:0000269" key="7">
    <source>
    </source>
</evidence>
<evidence type="ECO:0000269" key="8">
    <source>
    </source>
</evidence>
<evidence type="ECO:0000269" key="9">
    <source>
    </source>
</evidence>
<evidence type="ECO:0000303" key="10">
    <source>
    </source>
</evidence>
<evidence type="ECO:0000303" key="11">
    <source>
    </source>
</evidence>
<evidence type="ECO:0000305" key="12"/>
<evidence type="ECO:0000305" key="13">
    <source>
    </source>
</evidence>
<evidence type="ECO:0000305" key="14">
    <source>
    </source>
</evidence>
<evidence type="ECO:0000312" key="15">
    <source>
        <dbReference type="EMBL" id="CAD51862.1"/>
    </source>
</evidence>
<evidence type="ECO:0000312" key="16">
    <source>
        <dbReference type="Proteomes" id="UP000001450"/>
    </source>
</evidence>
<evidence type="ECO:0007744" key="17">
    <source>
        <dbReference type="PDB" id="3TGH"/>
    </source>
</evidence>
<evidence type="ECO:0007829" key="18">
    <source>
        <dbReference type="PDB" id="3TGH"/>
    </source>
</evidence>
<gene>
    <name evidence="10" type="primary">GAP50</name>
    <name evidence="15" type="ORF">PF3D7_0918000</name>
</gene>
<organism evidence="16">
    <name type="scientific">Plasmodium falciparum (isolate 3D7)</name>
    <dbReference type="NCBI Taxonomy" id="36329"/>
    <lineage>
        <taxon>Eukaryota</taxon>
        <taxon>Sar</taxon>
        <taxon>Alveolata</taxon>
        <taxon>Apicomplexa</taxon>
        <taxon>Aconoidasida</taxon>
        <taxon>Haemosporida</taxon>
        <taxon>Plasmodiidae</taxon>
        <taxon>Plasmodium</taxon>
        <taxon>Plasmodium (Laverania)</taxon>
    </lineage>
</organism>
<keyword id="KW-0002">3D-structure</keyword>
<keyword id="KW-1003">Cell membrane</keyword>
<keyword id="KW-0256">Endoplasmic reticulum</keyword>
<keyword id="KW-0378">Hydrolase</keyword>
<keyword id="KW-0472">Membrane</keyword>
<keyword id="KW-0479">Metal-binding</keyword>
<keyword id="KW-1185">Reference proteome</keyword>
<keyword id="KW-0732">Signal</keyword>
<keyword id="KW-0812">Transmembrane</keyword>
<keyword id="KW-1133">Transmembrane helix</keyword>
<sequence>MNYCKTTFHIFFFVLFFITIYEIKCQLRFASLGDWGKDTKGQILNAKYFKQFIKNERVTFIVSPGSNFIDGVKGLNDPAWKNLYEDVYSEEKGDMYMPFFTVLGTRDWTGNYNAQLLKGQGIYIEKNGETSIEKDADATNYPKWIMPNYWYHYFTHFTVSSGPSIVKTGHKDLAAAFIFIDTWVLSSNFPYKKIHEKAWNDLKSQLSVAKKIADFIIVVGDQPIYSSGYSRGSSYLAYYLLPLLKDAEVDLYISGHDNNMEVIEDNDMAHITCGSGSMSQGKSGMKNSKSLFFSSDIGFCVHELSNNGIVTKFVSSKKGEVIYTHKLNIKKKKTLDKVNALQHFAALPNVELTDVPSSGPMGNKDTFVRVVGTIGILIGSVIVFIGASSFLSKNMK</sequence>
<protein>
    <recommendedName>
        <fullName evidence="10">Glideosome-associated protein 50</fullName>
        <shortName evidence="10">PfGAP50</shortName>
    </recommendedName>
    <alternativeName>
        <fullName evidence="11">Secreted acid phosphatase</fullName>
        <shortName evidence="11">PfSAP</shortName>
        <ecNumber evidence="6">3.1.3.2</ecNumber>
    </alternativeName>
</protein>
<accession>Q8I2X3</accession>
<name>GAP50_PLAF7</name>
<reference evidence="16" key="1">
    <citation type="journal article" date="2002" name="Nature">
        <title>Genome sequence of the human malaria parasite Plasmodium falciparum.</title>
        <authorList>
            <person name="Gardner M.J."/>
            <person name="Hall N."/>
            <person name="Fung E."/>
            <person name="White O."/>
            <person name="Berriman M."/>
            <person name="Hyman R.W."/>
            <person name="Carlton J.M."/>
            <person name="Pain A."/>
            <person name="Nelson K.E."/>
            <person name="Bowman S."/>
            <person name="Paulsen I.T."/>
            <person name="James K.D."/>
            <person name="Eisen J.A."/>
            <person name="Rutherford K.M."/>
            <person name="Salzberg S.L."/>
            <person name="Craig A."/>
            <person name="Kyes S."/>
            <person name="Chan M.-S."/>
            <person name="Nene V."/>
            <person name="Shallom S.J."/>
            <person name="Suh B."/>
            <person name="Peterson J."/>
            <person name="Angiuoli S."/>
            <person name="Pertea M."/>
            <person name="Allen J."/>
            <person name="Selengut J."/>
            <person name="Haft D."/>
            <person name="Mather M.W."/>
            <person name="Vaidya A.B."/>
            <person name="Martin D.M.A."/>
            <person name="Fairlamb A.H."/>
            <person name="Fraunholz M.J."/>
            <person name="Roos D.S."/>
            <person name="Ralph S.A."/>
            <person name="McFadden G.I."/>
            <person name="Cummings L.M."/>
            <person name="Subramanian G.M."/>
            <person name="Mungall C."/>
            <person name="Venter J.C."/>
            <person name="Carucci D.J."/>
            <person name="Hoffman S.L."/>
            <person name="Newbold C."/>
            <person name="Davis R.W."/>
            <person name="Fraser C.M."/>
            <person name="Barrell B.G."/>
        </authorList>
    </citation>
    <scope>NUCLEOTIDE SEQUENCE [LARGE SCALE GENOMIC DNA]</scope>
    <source>
        <strain evidence="16">3D7</strain>
    </source>
</reference>
<reference evidence="16" key="2">
    <citation type="journal article" date="2002" name="Nature">
        <title>Sequence of Plasmodium falciparum chromosomes 1, 3-9 and 13.</title>
        <authorList>
            <person name="Hall N."/>
            <person name="Pain A."/>
            <person name="Berriman M."/>
            <person name="Churcher C.M."/>
            <person name="Harris B."/>
            <person name="Harris D."/>
            <person name="Mungall K.L."/>
            <person name="Bowman S."/>
            <person name="Atkin R."/>
            <person name="Baker S."/>
            <person name="Barron A."/>
            <person name="Brooks K."/>
            <person name="Buckee C.O."/>
            <person name="Burrows C."/>
            <person name="Cherevach I."/>
            <person name="Chillingworth C."/>
            <person name="Chillingworth T."/>
            <person name="Christodoulou Z."/>
            <person name="Clark L."/>
            <person name="Clark R."/>
            <person name="Corton C."/>
            <person name="Cronin A."/>
            <person name="Davies R.M."/>
            <person name="Davis P."/>
            <person name="Dear P."/>
            <person name="Dearden F."/>
            <person name="Doggett J."/>
            <person name="Feltwell T."/>
            <person name="Goble A."/>
            <person name="Goodhead I."/>
            <person name="Gwilliam R."/>
            <person name="Hamlin N."/>
            <person name="Hance Z."/>
            <person name="Harper D."/>
            <person name="Hauser H."/>
            <person name="Hornsby T."/>
            <person name="Holroyd S."/>
            <person name="Horrocks P."/>
            <person name="Humphray S."/>
            <person name="Jagels K."/>
            <person name="James K.D."/>
            <person name="Johnson D."/>
            <person name="Kerhornou A."/>
            <person name="Knights A."/>
            <person name="Konfortov B."/>
            <person name="Kyes S."/>
            <person name="Larke N."/>
            <person name="Lawson D."/>
            <person name="Lennard N."/>
            <person name="Line A."/>
            <person name="Maddison M."/>
            <person name="Mclean J."/>
            <person name="Mooney P."/>
            <person name="Moule S."/>
            <person name="Murphy L."/>
            <person name="Oliver K."/>
            <person name="Ormond D."/>
            <person name="Price C."/>
            <person name="Quail M.A."/>
            <person name="Rabbinowitsch E."/>
            <person name="Rajandream M.A."/>
            <person name="Rutter S."/>
            <person name="Rutherford K.M."/>
            <person name="Sanders M."/>
            <person name="Simmonds M."/>
            <person name="Seeger K."/>
            <person name="Sharp S."/>
            <person name="Smith R."/>
            <person name="Squares R."/>
            <person name="Squares S."/>
            <person name="Stevens K."/>
            <person name="Taylor K."/>
            <person name="Tivey A."/>
            <person name="Unwin L."/>
            <person name="Whitehead S."/>
            <person name="Woodward J.R."/>
            <person name="Sulston J.E."/>
            <person name="Craig A."/>
            <person name="Newbold C."/>
            <person name="Barrell B.G."/>
        </authorList>
    </citation>
    <scope>NUCLEOTIDE SEQUENCE [LARGE SCALE GENOMIC DNA]</scope>
    <source>
        <strain evidence="16">3D7</strain>
    </source>
</reference>
<reference evidence="12" key="3">
    <citation type="journal article" date="2006" name="J. Biol. Chem.">
        <title>A conserved molecular motor drives cell invasion and gliding motility across malaria life cycle stages and other apicomplexan parasites.</title>
        <authorList>
            <person name="Baum J."/>
            <person name="Richard D."/>
            <person name="Healer J."/>
            <person name="Rug M."/>
            <person name="Krnajski Z."/>
            <person name="Gilberger T.W."/>
            <person name="Green J.L."/>
            <person name="Holder A.A."/>
            <person name="Cowman A.F."/>
        </authorList>
    </citation>
    <scope>FUNCTION</scope>
    <scope>IDENTIFICATION IN THE GLIDEOSOME COMPLEX</scope>
    <scope>SUBCELLULAR LOCATION</scope>
    <scope>DEVELOPMENTAL STAGE</scope>
</reference>
<reference evidence="12" key="4">
    <citation type="journal article" date="2006" name="Mol. Biochem. Parasitol.">
        <title>Plasmodium falciparum erythrocyte invasion: a conserved myosin associated complex.</title>
        <authorList>
            <person name="Jones M.L."/>
            <person name="Kitson E.L."/>
            <person name="Rayner J.C."/>
        </authorList>
    </citation>
    <scope>FUNCTION</scope>
    <scope>IDENTIFICATION IN THE GLIDEOSOME COMPLEX</scope>
    <scope>SUBCELLULAR LOCATION</scope>
    <scope>DEVELOPMENTAL STAGE</scope>
</reference>
<reference evidence="12" key="5">
    <citation type="journal article" date="2006" name="Mol. Biochem. Parasitol.">
        <title>Dual acylation of the 45 kDa gliding-associated protein (GAP45) in Plasmodium falciparum merozoites.</title>
        <authorList>
            <person name="Rees-Channer R.R."/>
            <person name="Martin S.R."/>
            <person name="Green J.L."/>
            <person name="Bowyer P.W."/>
            <person name="Grainger M."/>
            <person name="Molloy J.E."/>
            <person name="Holder A.A."/>
        </authorList>
    </citation>
    <scope>FUNCTION</scope>
    <scope>IDENTIFICATION IN THE GLIDEOSOME COMPLEX</scope>
    <scope>DEVELOPMENTAL STAGE</scope>
</reference>
<reference evidence="12" key="6">
    <citation type="journal article" date="2009" name="Mol. Biochem. Parasitol.">
        <title>Effects of calcium signaling on Plasmodium falciparum erythrocyte invasion and post-translational modification of gliding-associated protein 45 (PfGAP45).</title>
        <authorList>
            <person name="Jones M.L."/>
            <person name="Cottingham C."/>
            <person name="Rayner J.C."/>
        </authorList>
    </citation>
    <scope>FUNCTION</scope>
    <scope>IDENTIFICATION IN THE GLIDEOSOME COMPLEX</scope>
    <scope>INTERACTION WITH GAP45</scope>
    <scope>DEVELOPMENTAL STAGE</scope>
</reference>
<reference evidence="12" key="7">
    <citation type="journal article" date="2010" name="Cell. Microbiol.">
        <title>Secretion of an acid phosphatase provides a possible mechanism to acquire host nutrients by Plasmodium falciparum.</title>
        <authorList>
            <person name="Mueller I.B."/>
            <person name="Knoeckel J."/>
            <person name="Eschbach M.L."/>
            <person name="Bergmann B."/>
            <person name="Walter R.D."/>
            <person name="Wrenger C."/>
        </authorList>
    </citation>
    <scope>FUNCTION</scope>
    <scope>CATALYTIC ACTIVITY</scope>
    <scope>ACTIVITY REGULATION</scope>
    <scope>BIOPHYSICOCHEMICAL PROPERTIES</scope>
    <scope>SUBCELLULAR LOCATION</scope>
    <scope>DEVELOPMENTAL STAGE</scope>
    <scope>PROTEOLYTIC CLEAVAGE</scope>
</reference>
<reference evidence="12" key="8">
    <citation type="journal article" date="2011" name="Eukaryot. Cell">
        <title>Tracking Glideosome-associated protein 50 reveals the development and organization of the inner membrane complex of Plasmodium falciparum.</title>
        <authorList>
            <person name="Yeoman J.A."/>
            <person name="Hanssen E."/>
            <person name="Maier A.G."/>
            <person name="Klonis N."/>
            <person name="Maco B."/>
            <person name="Baum J."/>
            <person name="Turnbull L."/>
            <person name="Whitchurch C.B."/>
            <person name="Dixon M.W."/>
            <person name="Tilley L."/>
        </authorList>
    </citation>
    <scope>IDENTIFICATION IN THE GLIDEOSOME COMPLEX</scope>
    <scope>SUBCELLULAR LOCATION</scope>
    <scope>DEVELOPMENTAL STAGE</scope>
    <scope>DOMAIN</scope>
    <scope>PROTEOLYTIC CLEAVAGE</scope>
</reference>
<reference evidence="12" key="9">
    <citation type="journal article" date="2013" name="Cell Host Microbe">
        <title>Malaria parasites co-opt human factor H to prevent complement-mediated lysis in the mosquito midgut.</title>
        <authorList>
            <person name="Simon N."/>
            <person name="Lasonder E."/>
            <person name="Scheuermayer M."/>
            <person name="Kuehn A."/>
            <person name="Tews S."/>
            <person name="Fischer R."/>
            <person name="Zipfel P.F."/>
            <person name="Skerka C."/>
            <person name="Pradel G."/>
        </authorList>
    </citation>
    <scope>FUNCTION</scope>
    <scope>INTERACTION WITH HUMAN FLH AND FLH-1 ISOFORMS</scope>
    <scope>SUBCELLULAR LOCATION</scope>
    <scope>DEVELOPMENTAL STAGE</scope>
    <scope>IDENTIFICATION BY MASS SPECTROMETRY</scope>
    <source>
        <strain evidence="9">NF54</strain>
    </source>
</reference>
<reference evidence="17" key="10">
    <citation type="journal article" date="2012" name="J. Struct. Biol.">
        <title>Crystal structure of GAP50, the anchor of the invasion machinery in the inner membrane complex of Plasmodium falciparum.</title>
        <authorList>
            <person name="Bosch J."/>
            <person name="Paige M.H."/>
            <person name="Vaidya A.B."/>
            <person name="Bergman L.W."/>
            <person name="Hol W.G."/>
        </authorList>
    </citation>
    <scope>X-RAY CRYSTALLOGRAPHY (1.70 ANGSTROMS) OF 24-365 IN COMPLEX WITH COBALT</scope>
    <scope>FUNCTION</scope>
    <scope>COFACTOR</scope>
</reference>
<feature type="signal peptide" evidence="13 14">
    <location>
        <begin position="1"/>
        <end status="unknown"/>
    </location>
</feature>
<feature type="chain" id="PRO_0000457326" description="Glideosome-associated protein 50">
    <location>
        <begin status="unknown"/>
        <end position="396"/>
    </location>
</feature>
<feature type="topological domain" description="Lumenal" evidence="12">
    <location>
        <begin position="1"/>
        <end position="369"/>
    </location>
</feature>
<feature type="transmembrane region" description="Helical" evidence="1">
    <location>
        <begin position="370"/>
        <end position="390"/>
    </location>
</feature>
<feature type="topological domain" description="Cytoplasmic" evidence="12">
    <location>
        <begin position="391"/>
        <end position="396"/>
    </location>
</feature>
<feature type="binding site" evidence="8 17">
    <location>
        <position position="195"/>
    </location>
    <ligand>
        <name>a metal cation</name>
        <dbReference type="ChEBI" id="CHEBI:25213"/>
        <label>1</label>
    </ligand>
</feature>
<feature type="binding site" evidence="8 17">
    <location>
        <position position="256"/>
    </location>
    <ligand>
        <name>a metal cation</name>
        <dbReference type="ChEBI" id="CHEBI:25213"/>
        <label>2</label>
    </ligand>
</feature>
<feature type="strand" evidence="18">
    <location>
        <begin position="27"/>
        <end position="31"/>
    </location>
</feature>
<feature type="helix" evidence="18">
    <location>
        <begin position="40"/>
        <end position="55"/>
    </location>
</feature>
<feature type="strand" evidence="18">
    <location>
        <begin position="60"/>
        <end position="63"/>
    </location>
</feature>
<feature type="helix" evidence="18">
    <location>
        <begin position="79"/>
        <end position="83"/>
    </location>
</feature>
<feature type="turn" evidence="18">
    <location>
        <begin position="84"/>
        <end position="87"/>
    </location>
</feature>
<feature type="helix" evidence="18">
    <location>
        <begin position="91"/>
        <end position="93"/>
    </location>
</feature>
<feature type="strand" evidence="18">
    <location>
        <begin position="97"/>
        <end position="101"/>
    </location>
</feature>
<feature type="helix" evidence="18">
    <location>
        <begin position="105"/>
        <end position="108"/>
    </location>
</feature>
<feature type="helix" evidence="18">
    <location>
        <begin position="112"/>
        <end position="120"/>
    </location>
</feature>
<feature type="strand" evidence="18">
    <location>
        <begin position="143"/>
        <end position="145"/>
    </location>
</feature>
<feature type="strand" evidence="18">
    <location>
        <begin position="147"/>
        <end position="159"/>
    </location>
</feature>
<feature type="strand" evidence="18">
    <location>
        <begin position="171"/>
        <end position="179"/>
    </location>
</feature>
<feature type="turn" evidence="18">
    <location>
        <begin position="182"/>
        <end position="185"/>
    </location>
</feature>
<feature type="helix" evidence="18">
    <location>
        <begin position="192"/>
        <end position="212"/>
    </location>
</feature>
<feature type="strand" evidence="18">
    <location>
        <begin position="214"/>
        <end position="219"/>
    </location>
</feature>
<feature type="helix" evidence="18">
    <location>
        <begin position="234"/>
        <end position="239"/>
    </location>
</feature>
<feature type="helix" evidence="18">
    <location>
        <begin position="241"/>
        <end position="246"/>
    </location>
</feature>
<feature type="strand" evidence="18">
    <location>
        <begin position="251"/>
        <end position="254"/>
    </location>
</feature>
<feature type="strand" evidence="18">
    <location>
        <begin position="256"/>
        <end position="265"/>
    </location>
</feature>
<feature type="strand" evidence="18">
    <location>
        <begin position="268"/>
        <end position="273"/>
    </location>
</feature>
<feature type="strand" evidence="18">
    <location>
        <begin position="290"/>
        <end position="294"/>
    </location>
</feature>
<feature type="strand" evidence="18">
    <location>
        <begin position="296"/>
        <end position="305"/>
    </location>
</feature>
<feature type="strand" evidence="18">
    <location>
        <begin position="308"/>
        <end position="315"/>
    </location>
</feature>
<feature type="turn" evidence="18">
    <location>
        <begin position="316"/>
        <end position="319"/>
    </location>
</feature>
<feature type="strand" evidence="18">
    <location>
        <begin position="320"/>
        <end position="328"/>
    </location>
</feature>
<feature type="helix" evidence="18">
    <location>
        <begin position="337"/>
        <end position="339"/>
    </location>
</feature>
<feature type="helix" evidence="18">
    <location>
        <begin position="340"/>
        <end position="344"/>
    </location>
</feature>
<dbReference type="EC" id="3.1.3.2" evidence="6"/>
<dbReference type="EMBL" id="AL844508">
    <property type="protein sequence ID" value="CAD51862.1"/>
    <property type="molecule type" value="Genomic_DNA"/>
</dbReference>
<dbReference type="RefSeq" id="XP_001352051.1">
    <property type="nucleotide sequence ID" value="XM_001352015.1"/>
</dbReference>
<dbReference type="PDB" id="3TGH">
    <property type="method" value="X-ray"/>
    <property type="resolution" value="1.70 A"/>
    <property type="chains" value="A=24-365"/>
</dbReference>
<dbReference type="PDBsum" id="3TGH"/>
<dbReference type="SMR" id="Q8I2X3"/>
<dbReference type="FunCoup" id="Q8I2X3">
    <property type="interactions" value="2"/>
</dbReference>
<dbReference type="STRING" id="36329.Q8I2X3"/>
<dbReference type="SwissPalm" id="Q8I2X3"/>
<dbReference type="PaxDb" id="5833-PFI0880c"/>
<dbReference type="PRIDE" id="Q8I2X3"/>
<dbReference type="EnsemblProtists" id="CAD51862">
    <property type="protein sequence ID" value="CAD51862"/>
    <property type="gene ID" value="PF3D7_0918000"/>
</dbReference>
<dbReference type="GeneID" id="813456"/>
<dbReference type="KEGG" id="pfa:PF3D7_0918000"/>
<dbReference type="VEuPathDB" id="PlasmoDB:PF3D7_0918000"/>
<dbReference type="HOGENOM" id="CLU_699224_0_0_1"/>
<dbReference type="InParanoid" id="Q8I2X3"/>
<dbReference type="OMA" id="GFCIHEL"/>
<dbReference type="OrthoDB" id="411211at2759"/>
<dbReference type="PhylomeDB" id="Q8I2X3"/>
<dbReference type="EvolutionaryTrace" id="Q8I2X3"/>
<dbReference type="Proteomes" id="UP000001450">
    <property type="component" value="Chromosome 9"/>
</dbReference>
<dbReference type="GO" id="GO:0005783">
    <property type="term" value="C:endoplasmic reticulum"/>
    <property type="evidence" value="ECO:0000314"/>
    <property type="project" value="GeneDB"/>
</dbReference>
<dbReference type="GO" id="GO:0005789">
    <property type="term" value="C:endoplasmic reticulum membrane"/>
    <property type="evidence" value="ECO:0007669"/>
    <property type="project" value="UniProtKB-SubCell"/>
</dbReference>
<dbReference type="GO" id="GO:0160055">
    <property type="term" value="C:glideosome"/>
    <property type="evidence" value="ECO:0000314"/>
    <property type="project" value="UniProtKB"/>
</dbReference>
<dbReference type="GO" id="GO:0070258">
    <property type="term" value="C:inner membrane pellicle complex"/>
    <property type="evidence" value="ECO:0000314"/>
    <property type="project" value="UniProtKB"/>
</dbReference>
<dbReference type="GO" id="GO:0005886">
    <property type="term" value="C:plasma membrane"/>
    <property type="evidence" value="ECO:0000314"/>
    <property type="project" value="GeneDB"/>
</dbReference>
<dbReference type="GO" id="GO:0003993">
    <property type="term" value="F:acid phosphatase activity"/>
    <property type="evidence" value="ECO:0000314"/>
    <property type="project" value="UniProtKB"/>
</dbReference>
<dbReference type="GO" id="GO:0008199">
    <property type="term" value="F:ferric iron binding"/>
    <property type="evidence" value="ECO:0000318"/>
    <property type="project" value="GO_Central"/>
</dbReference>
<dbReference type="GO" id="GO:0008198">
    <property type="term" value="F:ferrous iron binding"/>
    <property type="evidence" value="ECO:0000318"/>
    <property type="project" value="GO_Central"/>
</dbReference>
<dbReference type="GO" id="GO:0043495">
    <property type="term" value="F:protein-membrane adaptor activity"/>
    <property type="evidence" value="ECO:0000304"/>
    <property type="project" value="GeneDB"/>
</dbReference>
<dbReference type="GO" id="GO:0042784">
    <property type="term" value="P:symbiont-mediated suppression of host complement activation"/>
    <property type="evidence" value="ECO:0000314"/>
    <property type="project" value="UniProtKB"/>
</dbReference>
<dbReference type="CDD" id="cd07378">
    <property type="entry name" value="MPP_ACP5"/>
    <property type="match status" value="1"/>
</dbReference>
<dbReference type="DisProt" id="DP02934"/>
<dbReference type="FunFam" id="3.60.21.10:FF:000075">
    <property type="entry name" value="Glideosome-associated protein 50"/>
    <property type="match status" value="1"/>
</dbReference>
<dbReference type="Gene3D" id="3.60.21.10">
    <property type="match status" value="1"/>
</dbReference>
<dbReference type="InterPro" id="IPR024927">
    <property type="entry name" value="Acid_PPase"/>
</dbReference>
<dbReference type="InterPro" id="IPR004843">
    <property type="entry name" value="Calcineurin-like_PHP_ApaH"/>
</dbReference>
<dbReference type="InterPro" id="IPR029052">
    <property type="entry name" value="Metallo-depent_PP-like"/>
</dbReference>
<dbReference type="InterPro" id="IPR051558">
    <property type="entry name" value="Metallophosphoesterase_PAP"/>
</dbReference>
<dbReference type="PANTHER" id="PTHR10161">
    <property type="entry name" value="TARTRATE-RESISTANT ACID PHOSPHATASE TYPE 5"/>
    <property type="match status" value="1"/>
</dbReference>
<dbReference type="PANTHER" id="PTHR10161:SF14">
    <property type="entry name" value="TARTRATE-RESISTANT ACID PHOSPHATASE TYPE 5"/>
    <property type="match status" value="1"/>
</dbReference>
<dbReference type="Pfam" id="PF00149">
    <property type="entry name" value="Metallophos"/>
    <property type="match status" value="1"/>
</dbReference>
<dbReference type="SUPFAM" id="SSF56300">
    <property type="entry name" value="Metallo-dependent phosphatases"/>
    <property type="match status" value="1"/>
</dbReference>
<proteinExistence type="evidence at protein level"/>